<reference key="1">
    <citation type="journal article" date="2015" name="Proc. Natl. Acad. Sci. U.S.A.">
        <title>Specialized insulin is used for chemical warfare by fish-hunting cone snails.</title>
        <authorList>
            <person name="Safavi-Hemami H."/>
            <person name="Gajewiak J."/>
            <person name="Karanth S."/>
            <person name="Robinson S.D."/>
            <person name="Ueberheide B."/>
            <person name="Douglass A.D."/>
            <person name="Schlegel A."/>
            <person name="Imperial J.S."/>
            <person name="Watkins M."/>
            <person name="Bandyopadhyay P.K."/>
            <person name="Yandell M."/>
            <person name="Li Q."/>
            <person name="Purcell A.W."/>
            <person name="Norton R.S."/>
            <person name="Ellgaard L."/>
            <person name="Olivera B.M."/>
        </authorList>
    </citation>
    <scope>NUCLEOTIDE SEQUENCE [MRNA]</scope>
    <scope>AMIDATION AT SER-127</scope>
    <source>
        <tissue>Venom gland</tissue>
    </source>
</reference>
<keyword id="KW-0027">Amidation</keyword>
<keyword id="KW-0119">Carbohydrate metabolism</keyword>
<keyword id="KW-0165">Cleavage on pair of basic residues</keyword>
<keyword id="KW-1015">Disulfide bond</keyword>
<keyword id="KW-0301">Gamma-carboxyglutamic acid</keyword>
<keyword id="KW-0313">Glucose metabolism</keyword>
<keyword id="KW-0372">Hormone</keyword>
<keyword id="KW-0964">Secreted</keyword>
<keyword id="KW-0732">Signal</keyword>
<keyword id="KW-0800">Toxin</keyword>
<evidence type="ECO:0000250" key="1">
    <source>
        <dbReference type="UniProtKB" id="A0A0B5ABD9"/>
    </source>
</evidence>
<evidence type="ECO:0000250" key="2">
    <source>
        <dbReference type="UniProtKB" id="A0A0B5AC95"/>
    </source>
</evidence>
<evidence type="ECO:0000255" key="3"/>
<evidence type="ECO:0000303" key="4">
    <source>
    </source>
</evidence>
<evidence type="ECO:0000305" key="5"/>
<evidence type="ECO:0000305" key="6">
    <source>
    </source>
</evidence>
<evidence type="ECO:0000312" key="7">
    <source>
        <dbReference type="EMBL" id="AJD85837.1"/>
    </source>
</evidence>
<sequence length="128" mass="13900">MTTSSYFLLVTLGLLLYVCRSSFGTEHTCESDASPHPQGVCGSPLAEAVEAACELEEYLQGGTGKKRGRASPLRKRRAFLSMLKARAKRNEASPLQRSGRGIVCECCKNHCNIEELTEYCPPVTEGSG</sequence>
<comment type="function">
    <text evidence="2">This venom insulin facilitates prey capture by rapidly inducing hypoglycemic shock. Intraperitoneal injection of this peptide into zebrafish lowers blood glucose with the same potency than human insulin. In vivo, when applied to water, this peptide reduces overall locomotor activity of zebrafish larvae, observed as a significant decrease in the percentage of time spent swimming and movement frequency.</text>
</comment>
<comment type="subunit">
    <text evidence="2">Heterodimer of A and B chains; disulfide-linked.</text>
</comment>
<comment type="subcellular location">
    <subcellularLocation>
        <location evidence="2">Secreted</location>
    </subcellularLocation>
</comment>
<comment type="tissue specificity">
    <text evidence="6">Expressed by the venom gland.</text>
</comment>
<comment type="similarity">
    <text>Belongs to the insulin family.</text>
</comment>
<organism>
    <name type="scientific">Conus floridulus</name>
    <name type="common">Cone snail</name>
    <name type="synonym">Lividoconus floridulus</name>
    <dbReference type="NCBI Taxonomy" id="97180"/>
    <lineage>
        <taxon>Eukaryota</taxon>
        <taxon>Metazoa</taxon>
        <taxon>Spiralia</taxon>
        <taxon>Lophotrochozoa</taxon>
        <taxon>Mollusca</taxon>
        <taxon>Gastropoda</taxon>
        <taxon>Caenogastropoda</taxon>
        <taxon>Neogastropoda</taxon>
        <taxon>Conoidea</taxon>
        <taxon>Conidae</taxon>
        <taxon>Conus</taxon>
        <taxon>Lividoconus</taxon>
    </lineage>
</organism>
<protein>
    <recommendedName>
        <fullName evidence="4">Con-Ins F1</fullName>
    </recommendedName>
    <alternativeName>
        <fullName evidence="7">Insulin 1</fullName>
    </alternativeName>
    <component>
        <recommendedName>
            <fullName evidence="4">Con-Ins F1 B chain</fullName>
        </recommendedName>
    </component>
    <component>
        <recommendedName>
            <fullName evidence="4">Con-Ins F1 A chain</fullName>
        </recommendedName>
    </component>
</protein>
<dbReference type="EMBL" id="KP268605">
    <property type="protein sequence ID" value="AJD85837.1"/>
    <property type="molecule type" value="mRNA"/>
</dbReference>
<dbReference type="GO" id="GO:0005576">
    <property type="term" value="C:extracellular region"/>
    <property type="evidence" value="ECO:0007669"/>
    <property type="project" value="UniProtKB-SubCell"/>
</dbReference>
<dbReference type="GO" id="GO:0005179">
    <property type="term" value="F:hormone activity"/>
    <property type="evidence" value="ECO:0007669"/>
    <property type="project" value="UniProtKB-KW"/>
</dbReference>
<dbReference type="GO" id="GO:0090729">
    <property type="term" value="F:toxin activity"/>
    <property type="evidence" value="ECO:0007669"/>
    <property type="project" value="UniProtKB-KW"/>
</dbReference>
<dbReference type="GO" id="GO:0006006">
    <property type="term" value="P:glucose metabolic process"/>
    <property type="evidence" value="ECO:0007669"/>
    <property type="project" value="UniProtKB-KW"/>
</dbReference>
<dbReference type="Gene3D" id="1.10.100.10">
    <property type="entry name" value="Insulin-like"/>
    <property type="match status" value="1"/>
</dbReference>
<dbReference type="InterPro" id="IPR016179">
    <property type="entry name" value="Insulin-like"/>
</dbReference>
<dbReference type="InterPro" id="IPR036438">
    <property type="entry name" value="Insulin-like_sf"/>
</dbReference>
<dbReference type="InterPro" id="IPR016724">
    <property type="entry name" value="Insulin-rel_pep"/>
</dbReference>
<dbReference type="InterPro" id="IPR022353">
    <property type="entry name" value="Insulin_CS"/>
</dbReference>
<dbReference type="InterPro" id="IPR022352">
    <property type="entry name" value="Insulin_family"/>
</dbReference>
<dbReference type="PANTHER" id="PTHR13647:SF4">
    <property type="entry name" value="INSULIN-LIKE PEPTIDE 1-RELATED"/>
    <property type="match status" value="1"/>
</dbReference>
<dbReference type="PANTHER" id="PTHR13647">
    <property type="entry name" value="INSULIN-LIKE PEPTIDE 2-RELATED"/>
    <property type="match status" value="1"/>
</dbReference>
<dbReference type="Pfam" id="PF00049">
    <property type="entry name" value="Insulin"/>
    <property type="match status" value="1"/>
</dbReference>
<dbReference type="PIRSF" id="PIRSF018431">
    <property type="entry name" value="Molluscan_insulin_rel_peptide"/>
    <property type="match status" value="1"/>
</dbReference>
<dbReference type="PRINTS" id="PR00276">
    <property type="entry name" value="INSULINFAMLY"/>
</dbReference>
<dbReference type="SMART" id="SM00078">
    <property type="entry name" value="IlGF"/>
    <property type="match status" value="1"/>
</dbReference>
<dbReference type="SUPFAM" id="SSF56994">
    <property type="entry name" value="Insulin-like"/>
    <property type="match status" value="1"/>
</dbReference>
<dbReference type="PROSITE" id="PS00262">
    <property type="entry name" value="INSULIN"/>
    <property type="match status" value="1"/>
</dbReference>
<name>INS1_CONFO</name>
<accession>A0A0B5AC98</accession>
<proteinExistence type="evidence at protein level"/>
<feature type="signal peptide" evidence="3">
    <location>
        <begin position="1"/>
        <end position="24"/>
    </location>
</feature>
<feature type="peptide" id="PRO_5002098284" description="Con-Ins F1 B chain" evidence="1">
    <location>
        <begin position="25"/>
        <end position="58"/>
    </location>
</feature>
<feature type="propeptide" id="PRO_0000439332" description="C peptide" evidence="1">
    <location>
        <begin position="59"/>
        <end position="89"/>
    </location>
</feature>
<feature type="peptide" id="PRO_0000439333" description="Con-Ins F1 A chain" evidence="1">
    <location>
        <begin position="90"/>
        <end position="127"/>
    </location>
</feature>
<feature type="modified residue" description="4-carboxyglutamate; partial" evidence="2">
    <location>
        <position position="115"/>
    </location>
</feature>
<feature type="modified residue" description="Serine amide" evidence="6">
    <location>
        <position position="127"/>
    </location>
</feature>
<feature type="disulfide bond" evidence="5">
    <location>
        <begin position="29"/>
        <end position="104"/>
    </location>
</feature>
<feature type="disulfide bond" description="Interchain (between B and A chains)" evidence="2">
    <location>
        <begin position="41"/>
        <end position="107"/>
    </location>
</feature>
<feature type="disulfide bond" description="Interchain (between B and A chains)" evidence="2">
    <location>
        <begin position="53"/>
        <end position="120"/>
    </location>
</feature>
<feature type="disulfide bond" evidence="2">
    <location>
        <begin position="106"/>
        <end position="111"/>
    </location>
</feature>